<dbReference type="EMBL" id="AACD01000129">
    <property type="protein sequence ID" value="EAA62008.1"/>
    <property type="status" value="ALT_SEQ"/>
    <property type="molecule type" value="Genomic_DNA"/>
</dbReference>
<dbReference type="EMBL" id="BN001304">
    <property type="protein sequence ID" value="CBF79362.1"/>
    <property type="status" value="ALT_SEQ"/>
    <property type="molecule type" value="Genomic_DNA"/>
</dbReference>
<dbReference type="RefSeq" id="XP_680697.1">
    <property type="nucleotide sequence ID" value="XM_675605.1"/>
</dbReference>
<dbReference type="SMR" id="Q5AWA2"/>
<dbReference type="FunCoup" id="Q5AWA2">
    <property type="interactions" value="736"/>
</dbReference>
<dbReference type="STRING" id="227321.Q5AWA2"/>
<dbReference type="eggNOG" id="KOG2337">
    <property type="taxonomic scope" value="Eukaryota"/>
</dbReference>
<dbReference type="HOGENOM" id="CLU_012998_2_1_1"/>
<dbReference type="InParanoid" id="Q5AWA2"/>
<dbReference type="Proteomes" id="UP000000560">
    <property type="component" value="Chromosome IV"/>
</dbReference>
<dbReference type="GO" id="GO:0005737">
    <property type="term" value="C:cytoplasm"/>
    <property type="evidence" value="ECO:0000318"/>
    <property type="project" value="GO_Central"/>
</dbReference>
<dbReference type="GO" id="GO:0000407">
    <property type="term" value="C:phagophore assembly site"/>
    <property type="evidence" value="ECO:0000318"/>
    <property type="project" value="GO_Central"/>
</dbReference>
<dbReference type="GO" id="GO:0019778">
    <property type="term" value="F:Atg12 activating enzyme activity"/>
    <property type="evidence" value="ECO:0000318"/>
    <property type="project" value="GO_Central"/>
</dbReference>
<dbReference type="GO" id="GO:0019779">
    <property type="term" value="F:Atg8 activating enzyme activity"/>
    <property type="evidence" value="ECO:0000318"/>
    <property type="project" value="GO_Central"/>
</dbReference>
<dbReference type="GO" id="GO:0000045">
    <property type="term" value="P:autophagosome assembly"/>
    <property type="evidence" value="ECO:0000318"/>
    <property type="project" value="GO_Central"/>
</dbReference>
<dbReference type="GO" id="GO:0006995">
    <property type="term" value="P:cellular response to nitrogen starvation"/>
    <property type="evidence" value="ECO:0000318"/>
    <property type="project" value="GO_Central"/>
</dbReference>
<dbReference type="GO" id="GO:0000423">
    <property type="term" value="P:mitophagy"/>
    <property type="evidence" value="ECO:0000318"/>
    <property type="project" value="GO_Central"/>
</dbReference>
<dbReference type="GO" id="GO:0034727">
    <property type="term" value="P:piecemeal microautophagy of the nucleus"/>
    <property type="evidence" value="ECO:0000318"/>
    <property type="project" value="GO_Central"/>
</dbReference>
<dbReference type="GO" id="GO:0032446">
    <property type="term" value="P:protein modification by small protein conjugation"/>
    <property type="evidence" value="ECO:0000318"/>
    <property type="project" value="GO_Central"/>
</dbReference>
<dbReference type="GO" id="GO:0015031">
    <property type="term" value="P:protein transport"/>
    <property type="evidence" value="ECO:0007669"/>
    <property type="project" value="UniProtKB-KW"/>
</dbReference>
<dbReference type="FunFam" id="3.40.50.720:FF:000243">
    <property type="entry name" value="Ubiquitin-like modifier-activating enzyme ATG7"/>
    <property type="match status" value="1"/>
</dbReference>
<dbReference type="FunFam" id="3.40.140.70:FF:000001">
    <property type="entry name" value="Ubiquitin-like modifier-activating enzyme atg7"/>
    <property type="match status" value="1"/>
</dbReference>
<dbReference type="Gene3D" id="3.40.50.720">
    <property type="entry name" value="NAD(P)-binding Rossmann-like Domain"/>
    <property type="match status" value="1"/>
</dbReference>
<dbReference type="Gene3D" id="3.40.140.100">
    <property type="entry name" value="Ubiquitin-like modifier-activating enzyme ATG7 C-terminal domain"/>
    <property type="match status" value="1"/>
</dbReference>
<dbReference type="Gene3D" id="3.40.140.70">
    <property type="entry name" value="Ubiquitin-like modifier-activating enzyme ATG7 N-terminal domain"/>
    <property type="match status" value="1"/>
</dbReference>
<dbReference type="InterPro" id="IPR006285">
    <property type="entry name" value="Atg7"/>
</dbReference>
<dbReference type="InterPro" id="IPR032197">
    <property type="entry name" value="Atg7_N"/>
</dbReference>
<dbReference type="InterPro" id="IPR042522">
    <property type="entry name" value="Atg7_N_1"/>
</dbReference>
<dbReference type="InterPro" id="IPR042523">
    <property type="entry name" value="Atg7_N_2"/>
</dbReference>
<dbReference type="InterPro" id="IPR045886">
    <property type="entry name" value="ThiF/MoeB/HesA"/>
</dbReference>
<dbReference type="InterPro" id="IPR000594">
    <property type="entry name" value="ThiF_NAD_FAD-bd"/>
</dbReference>
<dbReference type="InterPro" id="IPR035985">
    <property type="entry name" value="Ubiquitin-activating_enz"/>
</dbReference>
<dbReference type="NCBIfam" id="TIGR01381">
    <property type="entry name" value="E1_like_apg7"/>
    <property type="match status" value="1"/>
</dbReference>
<dbReference type="PANTHER" id="PTHR10953">
    <property type="entry name" value="UBIQUITIN-ACTIVATING ENZYME E1"/>
    <property type="match status" value="1"/>
</dbReference>
<dbReference type="PANTHER" id="PTHR10953:SF3">
    <property type="entry name" value="UBIQUITIN-LIKE MODIFIER-ACTIVATING ENZYME ATG7"/>
    <property type="match status" value="1"/>
</dbReference>
<dbReference type="Pfam" id="PF16420">
    <property type="entry name" value="ATG7_N"/>
    <property type="match status" value="1"/>
</dbReference>
<dbReference type="Pfam" id="PF00899">
    <property type="entry name" value="ThiF"/>
    <property type="match status" value="1"/>
</dbReference>
<dbReference type="SUPFAM" id="SSF69572">
    <property type="entry name" value="Activating enzymes of the ubiquitin-like proteins"/>
    <property type="match status" value="1"/>
</dbReference>
<accession>Q5AWA2</accession>
<accession>C8VBA1</accession>
<evidence type="ECO:0000250" key="1"/>
<evidence type="ECO:0000305" key="2"/>
<gene>
    <name type="primary">atg7</name>
    <name type="ORF">AN7428</name>
</gene>
<proteinExistence type="inferred from homology"/>
<protein>
    <recommendedName>
        <fullName>Ubiquitin-like modifier-activating enzyme atg7</fullName>
    </recommendedName>
    <alternativeName>
        <fullName>ATG12-activating enzyme E1 atg7</fullName>
    </alternativeName>
    <alternativeName>
        <fullName>Autophagy-related protein 7</fullName>
    </alternativeName>
</protein>
<comment type="function">
    <text evidence="1">E1-like activating enzyme involved in the 2 ubiquitin-like systems required for cytoplasm to vacuole transport (Cvt) and autophagy. Activates atg12 for its conjugation with atg5 and atg8 for its conjugation with phosphatidylethanolamine. Both systems are needed for the atg8 association to Cvt vesicles and autophagosomes membranes. Autophagy is essential for maintenance of amino acid levels and protein synthesis under nitrogen starvation. Required for selective autophagic degradation of the nucleus (nucleophagy) as well as for mitophagy which contributes to regulate mitochondrial quantity and quality by eliminating the mitochondria to a basal level to fulfill cellular energy requirements and preventing excess ROS production. Plays a role in the regulation of filamentous growth and chronological longevity (By similarity).</text>
</comment>
<comment type="subunit">
    <text evidence="1">Homodimer.</text>
</comment>
<comment type="subcellular location">
    <subcellularLocation>
        <location evidence="1">Cytoplasm</location>
    </subcellularLocation>
    <subcellularLocation>
        <location evidence="1">Preautophagosomal structure</location>
    </subcellularLocation>
</comment>
<comment type="domain">
    <text evidence="1">The GxGxxG motif is important for the function, possibly through binding with ATP.</text>
</comment>
<comment type="similarity">
    <text evidence="2">Belongs to the ATG7 family.</text>
</comment>
<comment type="sequence caution" evidence="2">
    <conflict type="erroneous gene model prediction">
        <sequence resource="EMBL-CDS" id="CBF79362"/>
    </conflict>
</comment>
<comment type="sequence caution" evidence="2">
    <conflict type="erroneous gene model prediction">
        <sequence resource="EMBL-CDS" id="EAA62008"/>
    </conflict>
</comment>
<organism>
    <name type="scientific">Emericella nidulans (strain FGSC A4 / ATCC 38163 / CBS 112.46 / NRRL 194 / M139)</name>
    <name type="common">Aspergillus nidulans</name>
    <dbReference type="NCBI Taxonomy" id="227321"/>
    <lineage>
        <taxon>Eukaryota</taxon>
        <taxon>Fungi</taxon>
        <taxon>Dikarya</taxon>
        <taxon>Ascomycota</taxon>
        <taxon>Pezizomycotina</taxon>
        <taxon>Eurotiomycetes</taxon>
        <taxon>Eurotiomycetidae</taxon>
        <taxon>Eurotiales</taxon>
        <taxon>Aspergillaceae</taxon>
        <taxon>Aspergillus</taxon>
        <taxon>Aspergillus subgen. Nidulantes</taxon>
    </lineage>
</organism>
<reference key="1">
    <citation type="journal article" date="2005" name="Nature">
        <title>Sequencing of Aspergillus nidulans and comparative analysis with A. fumigatus and A. oryzae.</title>
        <authorList>
            <person name="Galagan J.E."/>
            <person name="Calvo S.E."/>
            <person name="Cuomo C."/>
            <person name="Ma L.-J."/>
            <person name="Wortman J.R."/>
            <person name="Batzoglou S."/>
            <person name="Lee S.-I."/>
            <person name="Bastuerkmen M."/>
            <person name="Spevak C.C."/>
            <person name="Clutterbuck J."/>
            <person name="Kapitonov V."/>
            <person name="Jurka J."/>
            <person name="Scazzocchio C."/>
            <person name="Farman M.L."/>
            <person name="Butler J."/>
            <person name="Purcell S."/>
            <person name="Harris S."/>
            <person name="Braus G.H."/>
            <person name="Draht O."/>
            <person name="Busch S."/>
            <person name="D'Enfert C."/>
            <person name="Bouchier C."/>
            <person name="Goldman G.H."/>
            <person name="Bell-Pedersen D."/>
            <person name="Griffiths-Jones S."/>
            <person name="Doonan J.H."/>
            <person name="Yu J."/>
            <person name="Vienken K."/>
            <person name="Pain A."/>
            <person name="Freitag M."/>
            <person name="Selker E.U."/>
            <person name="Archer D.B."/>
            <person name="Penalva M.A."/>
            <person name="Oakley B.R."/>
            <person name="Momany M."/>
            <person name="Tanaka T."/>
            <person name="Kumagai T."/>
            <person name="Asai K."/>
            <person name="Machida M."/>
            <person name="Nierman W.C."/>
            <person name="Denning D.W."/>
            <person name="Caddick M.X."/>
            <person name="Hynes M."/>
            <person name="Paoletti M."/>
            <person name="Fischer R."/>
            <person name="Miller B.L."/>
            <person name="Dyer P.S."/>
            <person name="Sachs M.S."/>
            <person name="Osmani S.A."/>
            <person name="Birren B.W."/>
        </authorList>
    </citation>
    <scope>NUCLEOTIDE SEQUENCE [LARGE SCALE GENOMIC DNA]</scope>
    <source>
        <strain>FGSC A4 / ATCC 38163 / CBS 112.46 / NRRL 194 / M139</strain>
    </source>
</reference>
<reference key="2">
    <citation type="journal article" date="2009" name="Fungal Genet. Biol.">
        <title>The 2008 update of the Aspergillus nidulans genome annotation: a community effort.</title>
        <authorList>
            <person name="Wortman J.R."/>
            <person name="Gilsenan J.M."/>
            <person name="Joardar V."/>
            <person name="Deegan J."/>
            <person name="Clutterbuck J."/>
            <person name="Andersen M.R."/>
            <person name="Archer D."/>
            <person name="Bencina M."/>
            <person name="Braus G."/>
            <person name="Coutinho P."/>
            <person name="von Dohren H."/>
            <person name="Doonan J."/>
            <person name="Driessen A.J."/>
            <person name="Durek P."/>
            <person name="Espeso E."/>
            <person name="Fekete E."/>
            <person name="Flipphi M."/>
            <person name="Estrada C.G."/>
            <person name="Geysens S."/>
            <person name="Goldman G."/>
            <person name="de Groot P.W."/>
            <person name="Hansen K."/>
            <person name="Harris S.D."/>
            <person name="Heinekamp T."/>
            <person name="Helmstaedt K."/>
            <person name="Henrissat B."/>
            <person name="Hofmann G."/>
            <person name="Homan T."/>
            <person name="Horio T."/>
            <person name="Horiuchi H."/>
            <person name="James S."/>
            <person name="Jones M."/>
            <person name="Karaffa L."/>
            <person name="Karanyi Z."/>
            <person name="Kato M."/>
            <person name="Keller N."/>
            <person name="Kelly D.E."/>
            <person name="Kiel J.A."/>
            <person name="Kim J.M."/>
            <person name="van der Klei I.J."/>
            <person name="Klis F.M."/>
            <person name="Kovalchuk A."/>
            <person name="Krasevec N."/>
            <person name="Kubicek C.P."/>
            <person name="Liu B."/>
            <person name="Maccabe A."/>
            <person name="Meyer V."/>
            <person name="Mirabito P."/>
            <person name="Miskei M."/>
            <person name="Mos M."/>
            <person name="Mullins J."/>
            <person name="Nelson D.R."/>
            <person name="Nielsen J."/>
            <person name="Oakley B.R."/>
            <person name="Osmani S.A."/>
            <person name="Pakula T."/>
            <person name="Paszewski A."/>
            <person name="Paulsen I."/>
            <person name="Pilsyk S."/>
            <person name="Pocsi I."/>
            <person name="Punt P.J."/>
            <person name="Ram A.F."/>
            <person name="Ren Q."/>
            <person name="Robellet X."/>
            <person name="Robson G."/>
            <person name="Seiboth B."/>
            <person name="van Solingen P."/>
            <person name="Specht T."/>
            <person name="Sun J."/>
            <person name="Taheri-Talesh N."/>
            <person name="Takeshita N."/>
            <person name="Ussery D."/>
            <person name="vanKuyk P.A."/>
            <person name="Visser H."/>
            <person name="van de Vondervoort P.J."/>
            <person name="de Vries R.P."/>
            <person name="Walton J."/>
            <person name="Xiang X."/>
            <person name="Xiong Y."/>
            <person name="Zeng A.P."/>
            <person name="Brandt B.W."/>
            <person name="Cornell M.J."/>
            <person name="van den Hondel C.A."/>
            <person name="Visser J."/>
            <person name="Oliver S.G."/>
            <person name="Turner G."/>
        </authorList>
    </citation>
    <scope>GENOME REANNOTATION</scope>
    <source>
        <strain>FGSC A4 / ATCC 38163 / CBS 112.46 / NRRL 194 / M139</strain>
    </source>
</reference>
<feature type="chain" id="PRO_0000212815" description="Ubiquitin-like modifier-activating enzyme atg7">
    <location>
        <begin position="1"/>
        <end position="662"/>
    </location>
</feature>
<feature type="short sequence motif" description="GXGXXG motif" evidence="1">
    <location>
        <begin position="363"/>
        <end position="368"/>
    </location>
</feature>
<feature type="active site" description="Glycyl thioester intermediate" evidence="1">
    <location>
        <position position="543"/>
    </location>
</feature>
<sequence length="662" mass="73420">MQYTPFASDIELPFYIALASLKINHDKLDDSARKVLGLYELRPSDAPNASCRIQIHGNALTSDEVPSTYYRAEGMIKNVNTIEEYAKADKMGMLQQSGETIWNAINNGTIYSCPSLLSAFVILSYADLKKYKFHYWFAFPALHSDPSWTPLEEGCEGAQAHRLPSVESSALARSVQEWARVVDAPQRGFFLARRVRMRDDDTVSWKIASLSSYEDGFFKHAEFADCFTCFVDPSNYEEAPGWMLRNLLVLVKRRWGLTKVQILRYRDGPSPRDCGRSIVVTLRLKTSQLPDGGVKDDRMPKVTGWERNPSGKLTGRIVDLTEQLDPKRLADQSVDLNLKLMKWRISPNLDLEKIKGTKCLLLGAGTLGSYVARNLMAWGVRKITFVDNGSVSFSNPVRQPLFNFADCLDGGAKKAYRASQALSEIYPGVESVGHVLAVPMAGHPVLDAEKTKADFEVLKGLIDAHDVIILLMDTRESRWLPTVMGKAAGKIVMNAALGFDTFVVMRHGVTNNEHPEEELGCYFCNDVVAPMNSQKDQTLDQQCTVTRPGVAAIASALLVELLVSLLQHPLGAAAGAPQTPNNTQNDHPLGVIPHQIRGFLSTFENVSVVGRSYKCCSACSRPVIDEYKKNGWNFVQKALNEVGYVEELSGLKEVCHPPLSIA</sequence>
<keyword id="KW-0072">Autophagy</keyword>
<keyword id="KW-0963">Cytoplasm</keyword>
<keyword id="KW-0653">Protein transport</keyword>
<keyword id="KW-1185">Reference proteome</keyword>
<keyword id="KW-0813">Transport</keyword>
<keyword id="KW-0833">Ubl conjugation pathway</keyword>
<name>ATG7_EMENI</name>